<feature type="chain" id="PRO_0000411779" description="Probable Xaa-Pro aminopeptidase P">
    <location>
        <begin position="1"/>
        <end position="654"/>
    </location>
</feature>
<feature type="binding site" evidence="1">
    <location>
        <position position="449"/>
    </location>
    <ligand>
        <name>Mn(2+)</name>
        <dbReference type="ChEBI" id="CHEBI:29035"/>
        <label>2</label>
    </ligand>
</feature>
<feature type="binding site" evidence="1">
    <location>
        <position position="460"/>
    </location>
    <ligand>
        <name>Mn(2+)</name>
        <dbReference type="ChEBI" id="CHEBI:29035"/>
        <label>1</label>
    </ligand>
</feature>
<feature type="binding site" evidence="1">
    <location>
        <position position="460"/>
    </location>
    <ligand>
        <name>Mn(2+)</name>
        <dbReference type="ChEBI" id="CHEBI:29035"/>
        <label>2</label>
    </ligand>
</feature>
<feature type="binding site" evidence="1">
    <location>
        <position position="558"/>
    </location>
    <ligand>
        <name>Mn(2+)</name>
        <dbReference type="ChEBI" id="CHEBI:29035"/>
        <label>1</label>
    </ligand>
</feature>
<feature type="binding site" evidence="1">
    <location>
        <position position="572"/>
    </location>
    <ligand>
        <name>Mn(2+)</name>
        <dbReference type="ChEBI" id="CHEBI:29035"/>
        <label>1</label>
    </ligand>
</feature>
<feature type="binding site" evidence="1">
    <location>
        <position position="572"/>
    </location>
    <ligand>
        <name>Mn(2+)</name>
        <dbReference type="ChEBI" id="CHEBI:29035"/>
        <label>2</label>
    </ligand>
</feature>
<dbReference type="EC" id="3.4.11.9"/>
<dbReference type="EMBL" id="DS499597">
    <property type="protein sequence ID" value="EDP51548.1"/>
    <property type="molecule type" value="Genomic_DNA"/>
</dbReference>
<dbReference type="SMR" id="B0Y3V7"/>
<dbReference type="MEROPS" id="M24.009"/>
<dbReference type="EnsemblFungi" id="EDP51548">
    <property type="protein sequence ID" value="EDP51548"/>
    <property type="gene ID" value="AFUB_055580"/>
</dbReference>
<dbReference type="VEuPathDB" id="FungiDB:AFUB_055580"/>
<dbReference type="HOGENOM" id="CLU_011781_2_2_1"/>
<dbReference type="OrthoDB" id="31708at5052"/>
<dbReference type="PhylomeDB" id="B0Y3V7"/>
<dbReference type="Proteomes" id="UP000001699">
    <property type="component" value="Unassembled WGS sequence"/>
</dbReference>
<dbReference type="GO" id="GO:0005737">
    <property type="term" value="C:cytoplasm"/>
    <property type="evidence" value="ECO:0007669"/>
    <property type="project" value="UniProtKB-ARBA"/>
</dbReference>
<dbReference type="GO" id="GO:0046872">
    <property type="term" value="F:metal ion binding"/>
    <property type="evidence" value="ECO:0007669"/>
    <property type="project" value="UniProtKB-KW"/>
</dbReference>
<dbReference type="GO" id="GO:0070006">
    <property type="term" value="F:metalloaminopeptidase activity"/>
    <property type="evidence" value="ECO:0007669"/>
    <property type="project" value="InterPro"/>
</dbReference>
<dbReference type="GO" id="GO:0006508">
    <property type="term" value="P:proteolysis"/>
    <property type="evidence" value="ECO:0007669"/>
    <property type="project" value="UniProtKB-KW"/>
</dbReference>
<dbReference type="CDD" id="cd01085">
    <property type="entry name" value="APP"/>
    <property type="match status" value="1"/>
</dbReference>
<dbReference type="FunFam" id="3.40.350.10:FF:000010">
    <property type="entry name" value="Probable Xaa-Pro aminopeptidase P"/>
    <property type="match status" value="1"/>
</dbReference>
<dbReference type="FunFam" id="3.90.230.10:FF:000007">
    <property type="entry name" value="Xaa-Pro aminopeptidase P"/>
    <property type="match status" value="1"/>
</dbReference>
<dbReference type="FunFam" id="3.40.350.10:FF:000003">
    <property type="entry name" value="Xaa-pro aminopeptidase P"/>
    <property type="match status" value="1"/>
</dbReference>
<dbReference type="Gene3D" id="3.90.230.10">
    <property type="entry name" value="Creatinase/methionine aminopeptidase superfamily"/>
    <property type="match status" value="1"/>
</dbReference>
<dbReference type="Gene3D" id="3.40.350.10">
    <property type="entry name" value="Creatinase/prolidase N-terminal domain"/>
    <property type="match status" value="2"/>
</dbReference>
<dbReference type="InterPro" id="IPR029149">
    <property type="entry name" value="Creatin/AminoP/Spt16_N"/>
</dbReference>
<dbReference type="InterPro" id="IPR036005">
    <property type="entry name" value="Creatinase/aminopeptidase-like"/>
</dbReference>
<dbReference type="InterPro" id="IPR000587">
    <property type="entry name" value="Creatinase_N"/>
</dbReference>
<dbReference type="InterPro" id="IPR000994">
    <property type="entry name" value="Pept_M24"/>
</dbReference>
<dbReference type="InterPro" id="IPR033740">
    <property type="entry name" value="Pept_M24B"/>
</dbReference>
<dbReference type="InterPro" id="IPR032416">
    <property type="entry name" value="Peptidase_M24_C"/>
</dbReference>
<dbReference type="InterPro" id="IPR001131">
    <property type="entry name" value="Peptidase_M24B_aminopep-P_CS"/>
</dbReference>
<dbReference type="InterPro" id="IPR050422">
    <property type="entry name" value="X-Pro_aminopeptidase_P"/>
</dbReference>
<dbReference type="PANTHER" id="PTHR43763">
    <property type="entry name" value="XAA-PRO AMINOPEPTIDASE 1"/>
    <property type="match status" value="1"/>
</dbReference>
<dbReference type="PANTHER" id="PTHR43763:SF6">
    <property type="entry name" value="XAA-PRO AMINOPEPTIDASE 1"/>
    <property type="match status" value="1"/>
</dbReference>
<dbReference type="Pfam" id="PF01321">
    <property type="entry name" value="Creatinase_N"/>
    <property type="match status" value="1"/>
</dbReference>
<dbReference type="Pfam" id="PF16189">
    <property type="entry name" value="Creatinase_N_2"/>
    <property type="match status" value="1"/>
</dbReference>
<dbReference type="Pfam" id="PF00557">
    <property type="entry name" value="Peptidase_M24"/>
    <property type="match status" value="1"/>
</dbReference>
<dbReference type="Pfam" id="PF16188">
    <property type="entry name" value="Peptidase_M24_C"/>
    <property type="match status" value="1"/>
</dbReference>
<dbReference type="SUPFAM" id="SSF55920">
    <property type="entry name" value="Creatinase/aminopeptidase"/>
    <property type="match status" value="1"/>
</dbReference>
<dbReference type="SUPFAM" id="SSF53092">
    <property type="entry name" value="Creatinase/prolidase N-terminal domain"/>
    <property type="match status" value="1"/>
</dbReference>
<dbReference type="PROSITE" id="PS00491">
    <property type="entry name" value="PROLINE_PEPTIDASE"/>
    <property type="match status" value="1"/>
</dbReference>
<sequence>MLGFRSPIRLCKLSALGSTRLLPISRPKLFSTAVARYAADMETVNTTKRLARLRQLMQEHKIDVYIVPSEDSHQSEYIAPCDGRREFISGFSGSAGTAIVSMTKAALSTDGRYFNQASKQLDSNWELLKRGVENVPTWQEWTTEQAQGGKVVGVDPALITASGARSLEETLKRNGSSLVGISQNLVDLVWGKDRPAPPREKVRVHPDKFSGKTFQEKIADLRKELEKKKTAGFVISMLDEIAWLFNLRGSDIPYNPVFFAYAIITPTKAELYIDDDKITPEVVAHLGQDVVIKPYNSIFADAKALSEARRKEAGETASKFLLSNKASWALSLSLGGEEHVEETRSPIADAKAIKNEVELAGMRACHIRDGAALIEYFAWLENELVNKKTVLDEVDAADKLEQIRTKHDLFAGLSFDTISSTGPNGAVIHYKPEKGTCSIIDPDAIYLCDSGAQYLDGTTDVTRTFHFGKPTELEKKAFTLVLKGLIAIDTAVFPKGTSGFALDALARQYLWKEGLDYLHGTGHGVGSYLNVHEGPIGIGTRVQYTEVPIAPGNVISDEPGFYEDGKFGIRIENVIMAREVQTTHKFGDKPWLGFEHVTMAPIGRNLIEPSLLSDLELKWVNDYHAEVWDKTHHFFENDEFTRSWLQRETAPITK</sequence>
<proteinExistence type="inferred from homology"/>
<comment type="function">
    <text evidence="1">Catalyzes the removal of a penultimate prolyl residue from the N-termini of peptides.</text>
</comment>
<comment type="catalytic activity">
    <reaction>
        <text>Release of any N-terminal amino acid, including proline, that is linked to proline, even from a dipeptide or tripeptide.</text>
        <dbReference type="EC" id="3.4.11.9"/>
    </reaction>
</comment>
<comment type="cofactor">
    <cofactor evidence="1">
        <name>Mn(2+)</name>
        <dbReference type="ChEBI" id="CHEBI:29035"/>
    </cofactor>
    <text evidence="1">Binds 2 manganese ions per subunit.</text>
</comment>
<comment type="similarity">
    <text evidence="2">Belongs to the peptidase M24B family.</text>
</comment>
<accession>B0Y3V7</accession>
<protein>
    <recommendedName>
        <fullName>Probable Xaa-Pro aminopeptidase P</fullName>
        <shortName>AMPP</shortName>
        <shortName>Aminopeptidase P</shortName>
        <ecNumber>3.4.11.9</ecNumber>
    </recommendedName>
    <alternativeName>
        <fullName>Aminoacylproline aminopeptidase</fullName>
    </alternativeName>
    <alternativeName>
        <fullName>Prolidase</fullName>
    </alternativeName>
</protein>
<evidence type="ECO:0000250" key="1"/>
<evidence type="ECO:0000305" key="2"/>
<gene>
    <name type="primary">ampp</name>
    <name type="ORF">AFUB_055580</name>
</gene>
<organism>
    <name type="scientific">Aspergillus fumigatus (strain CBS 144.89 / FGSC A1163 / CEA10)</name>
    <name type="common">Neosartorya fumigata</name>
    <dbReference type="NCBI Taxonomy" id="451804"/>
    <lineage>
        <taxon>Eukaryota</taxon>
        <taxon>Fungi</taxon>
        <taxon>Dikarya</taxon>
        <taxon>Ascomycota</taxon>
        <taxon>Pezizomycotina</taxon>
        <taxon>Eurotiomycetes</taxon>
        <taxon>Eurotiomycetidae</taxon>
        <taxon>Eurotiales</taxon>
        <taxon>Aspergillaceae</taxon>
        <taxon>Aspergillus</taxon>
        <taxon>Aspergillus subgen. Fumigati</taxon>
    </lineage>
</organism>
<keyword id="KW-0031">Aminopeptidase</keyword>
<keyword id="KW-0378">Hydrolase</keyword>
<keyword id="KW-0464">Manganese</keyword>
<keyword id="KW-0479">Metal-binding</keyword>
<keyword id="KW-0482">Metalloprotease</keyword>
<keyword id="KW-0645">Protease</keyword>
<reference key="1">
    <citation type="journal article" date="2008" name="PLoS Genet.">
        <title>Genomic islands in the pathogenic filamentous fungus Aspergillus fumigatus.</title>
        <authorList>
            <person name="Fedorova N.D."/>
            <person name="Khaldi N."/>
            <person name="Joardar V.S."/>
            <person name="Maiti R."/>
            <person name="Amedeo P."/>
            <person name="Anderson M.J."/>
            <person name="Crabtree J."/>
            <person name="Silva J.C."/>
            <person name="Badger J.H."/>
            <person name="Albarraq A."/>
            <person name="Angiuoli S."/>
            <person name="Bussey H."/>
            <person name="Bowyer P."/>
            <person name="Cotty P.J."/>
            <person name="Dyer P.S."/>
            <person name="Egan A."/>
            <person name="Galens K."/>
            <person name="Fraser-Liggett C.M."/>
            <person name="Haas B.J."/>
            <person name="Inman J.M."/>
            <person name="Kent R."/>
            <person name="Lemieux S."/>
            <person name="Malavazi I."/>
            <person name="Orvis J."/>
            <person name="Roemer T."/>
            <person name="Ronning C.M."/>
            <person name="Sundaram J.P."/>
            <person name="Sutton G."/>
            <person name="Turner G."/>
            <person name="Venter J.C."/>
            <person name="White O.R."/>
            <person name="Whitty B.R."/>
            <person name="Youngman P."/>
            <person name="Wolfe K.H."/>
            <person name="Goldman G.H."/>
            <person name="Wortman J.R."/>
            <person name="Jiang B."/>
            <person name="Denning D.W."/>
            <person name="Nierman W.C."/>
        </authorList>
    </citation>
    <scope>NUCLEOTIDE SEQUENCE [LARGE SCALE GENOMIC DNA]</scope>
    <source>
        <strain>CBS 144.89 / FGSC A1163 / CEA10</strain>
    </source>
</reference>
<name>AMPP1_ASPFC</name>